<sequence>MANKQDLIAKVAEATELTKKDSAAAVDAVFSTIEAFLAEGEKVQLIGFGNFEVRERAARKGRNPQTGAEIEIAASKVPAFKAGKALKDAVK</sequence>
<proteinExistence type="inferred from homology"/>
<dbReference type="EMBL" id="AE009949">
    <property type="status" value="NOT_ANNOTATED_CDS"/>
    <property type="molecule type" value="Genomic_DNA"/>
</dbReference>
<dbReference type="RefSeq" id="WP_002983920.1">
    <property type="nucleotide sequence ID" value="NC_003485.1"/>
</dbReference>
<dbReference type="SMR" id="P0C097"/>
<dbReference type="GO" id="GO:0005829">
    <property type="term" value="C:cytosol"/>
    <property type="evidence" value="ECO:0007669"/>
    <property type="project" value="TreeGrafter"/>
</dbReference>
<dbReference type="GO" id="GO:0003677">
    <property type="term" value="F:DNA binding"/>
    <property type="evidence" value="ECO:0007669"/>
    <property type="project" value="UniProtKB-KW"/>
</dbReference>
<dbReference type="GO" id="GO:0030527">
    <property type="term" value="F:structural constituent of chromatin"/>
    <property type="evidence" value="ECO:0007669"/>
    <property type="project" value="InterPro"/>
</dbReference>
<dbReference type="GO" id="GO:0030261">
    <property type="term" value="P:chromosome condensation"/>
    <property type="evidence" value="ECO:0007669"/>
    <property type="project" value="UniProtKB-KW"/>
</dbReference>
<dbReference type="CDD" id="cd13831">
    <property type="entry name" value="HU"/>
    <property type="match status" value="1"/>
</dbReference>
<dbReference type="FunFam" id="4.10.520.10:FF:000001">
    <property type="entry name" value="DNA-binding protein HU"/>
    <property type="match status" value="1"/>
</dbReference>
<dbReference type="Gene3D" id="4.10.520.10">
    <property type="entry name" value="IHF-like DNA-binding proteins"/>
    <property type="match status" value="1"/>
</dbReference>
<dbReference type="InterPro" id="IPR000119">
    <property type="entry name" value="Hist_DNA-bd"/>
</dbReference>
<dbReference type="InterPro" id="IPR020816">
    <property type="entry name" value="Histone-like_DNA-bd_CS"/>
</dbReference>
<dbReference type="InterPro" id="IPR010992">
    <property type="entry name" value="IHF-like_DNA-bd_dom_sf"/>
</dbReference>
<dbReference type="PANTHER" id="PTHR33175">
    <property type="entry name" value="DNA-BINDING PROTEIN HU"/>
    <property type="match status" value="1"/>
</dbReference>
<dbReference type="PANTHER" id="PTHR33175:SF3">
    <property type="entry name" value="DNA-BINDING PROTEIN HU-BETA"/>
    <property type="match status" value="1"/>
</dbReference>
<dbReference type="Pfam" id="PF00216">
    <property type="entry name" value="Bac_DNA_binding"/>
    <property type="match status" value="1"/>
</dbReference>
<dbReference type="PRINTS" id="PR01727">
    <property type="entry name" value="DNABINDINGHU"/>
</dbReference>
<dbReference type="SMART" id="SM00411">
    <property type="entry name" value="BHL"/>
    <property type="match status" value="1"/>
</dbReference>
<dbReference type="SUPFAM" id="SSF47729">
    <property type="entry name" value="IHF-like DNA-binding proteins"/>
    <property type="match status" value="1"/>
</dbReference>
<dbReference type="PROSITE" id="PS00045">
    <property type="entry name" value="HISTONE_LIKE"/>
    <property type="match status" value="1"/>
</dbReference>
<keyword id="KW-0226">DNA condensation</keyword>
<keyword id="KW-0238">DNA-binding</keyword>
<keyword id="KW-0843">Virulence</keyword>
<protein>
    <recommendedName>
        <fullName>DNA-binding protein HU</fullName>
    </recommendedName>
</protein>
<comment type="function">
    <text evidence="1">Histone-like DNA-binding protein which is capable of wrapping DNA to stabilize it, and thus to prevent its denaturation under extreme environmental conditions. Also seems to act as a fortuitous virulence factor in delayed sequelae by binding to heparan sulfate-proteoglycans in the extracellular matrix of target organs and acting as a nidus for in situ immune complex formation (By similarity).</text>
</comment>
<comment type="similarity">
    <text evidence="2">Belongs to the bacterial histone-like protein family.</text>
</comment>
<accession>P0C097</accession>
<gene>
    <name type="primary">hup</name>
    <name type="synonym">hlpA</name>
    <name type="ordered locus">spyM18_1508.1</name>
</gene>
<organism>
    <name type="scientific">Streptococcus pyogenes serotype M18 (strain MGAS8232)</name>
    <dbReference type="NCBI Taxonomy" id="186103"/>
    <lineage>
        <taxon>Bacteria</taxon>
        <taxon>Bacillati</taxon>
        <taxon>Bacillota</taxon>
        <taxon>Bacilli</taxon>
        <taxon>Lactobacillales</taxon>
        <taxon>Streptococcaceae</taxon>
        <taxon>Streptococcus</taxon>
    </lineage>
</organism>
<feature type="chain" id="PRO_0000104985" description="DNA-binding protein HU">
    <location>
        <begin position="1"/>
        <end position="91"/>
    </location>
</feature>
<reference key="1">
    <citation type="journal article" date="2002" name="Proc. Natl. Acad. Sci. U.S.A.">
        <title>Genome sequence and comparative microarray analysis of serotype M18 group A Streptococcus strains associated with acute rheumatic fever outbreaks.</title>
        <authorList>
            <person name="Smoot J.C."/>
            <person name="Barbian K.D."/>
            <person name="Van Gompel J.J."/>
            <person name="Smoot L.M."/>
            <person name="Chaussee M.S."/>
            <person name="Sylva G.L."/>
            <person name="Sturdevant D.E."/>
            <person name="Ricklefs S.M."/>
            <person name="Porcella S.F."/>
            <person name="Parkins L.D."/>
            <person name="Beres S.B."/>
            <person name="Campbell D.S."/>
            <person name="Smith T.M."/>
            <person name="Zhang Q."/>
            <person name="Kapur V."/>
            <person name="Daly J.A."/>
            <person name="Veasy L.G."/>
            <person name="Musser J.M."/>
        </authorList>
    </citation>
    <scope>NUCLEOTIDE SEQUENCE [LARGE SCALE GENOMIC DNA]</scope>
    <source>
        <strain>MGAS8232</strain>
    </source>
</reference>
<evidence type="ECO:0000250" key="1"/>
<evidence type="ECO:0000305" key="2"/>
<name>DBH_STRP8</name>